<organism>
    <name type="scientific">Arabidopsis thaliana</name>
    <name type="common">Mouse-ear cress</name>
    <dbReference type="NCBI Taxonomy" id="3702"/>
    <lineage>
        <taxon>Eukaryota</taxon>
        <taxon>Viridiplantae</taxon>
        <taxon>Streptophyta</taxon>
        <taxon>Embryophyta</taxon>
        <taxon>Tracheophyta</taxon>
        <taxon>Spermatophyta</taxon>
        <taxon>Magnoliopsida</taxon>
        <taxon>eudicotyledons</taxon>
        <taxon>Gunneridae</taxon>
        <taxon>Pentapetalae</taxon>
        <taxon>rosids</taxon>
        <taxon>malvids</taxon>
        <taxon>Brassicales</taxon>
        <taxon>Brassicaceae</taxon>
        <taxon>Camelineae</taxon>
        <taxon>Arabidopsis</taxon>
    </lineage>
</organism>
<accession>Q9FZC7</accession>
<accession>Q8RWA4</accession>
<reference key="1">
    <citation type="journal article" date="2000" name="Nature">
        <title>Sequence and analysis of chromosome 1 of the plant Arabidopsis thaliana.</title>
        <authorList>
            <person name="Theologis A."/>
            <person name="Ecker J.R."/>
            <person name="Palm C.J."/>
            <person name="Federspiel N.A."/>
            <person name="Kaul S."/>
            <person name="White O."/>
            <person name="Alonso J."/>
            <person name="Altafi H."/>
            <person name="Araujo R."/>
            <person name="Bowman C.L."/>
            <person name="Brooks S.Y."/>
            <person name="Buehler E."/>
            <person name="Chan A."/>
            <person name="Chao Q."/>
            <person name="Chen H."/>
            <person name="Cheuk R.F."/>
            <person name="Chin C.W."/>
            <person name="Chung M.K."/>
            <person name="Conn L."/>
            <person name="Conway A.B."/>
            <person name="Conway A.R."/>
            <person name="Creasy T.H."/>
            <person name="Dewar K."/>
            <person name="Dunn P."/>
            <person name="Etgu P."/>
            <person name="Feldblyum T.V."/>
            <person name="Feng J.-D."/>
            <person name="Fong B."/>
            <person name="Fujii C.Y."/>
            <person name="Gill J.E."/>
            <person name="Goldsmith A.D."/>
            <person name="Haas B."/>
            <person name="Hansen N.F."/>
            <person name="Hughes B."/>
            <person name="Huizar L."/>
            <person name="Hunter J.L."/>
            <person name="Jenkins J."/>
            <person name="Johnson-Hopson C."/>
            <person name="Khan S."/>
            <person name="Khaykin E."/>
            <person name="Kim C.J."/>
            <person name="Koo H.L."/>
            <person name="Kremenetskaia I."/>
            <person name="Kurtz D.B."/>
            <person name="Kwan A."/>
            <person name="Lam B."/>
            <person name="Langin-Hooper S."/>
            <person name="Lee A."/>
            <person name="Lee J.M."/>
            <person name="Lenz C.A."/>
            <person name="Li J.H."/>
            <person name="Li Y.-P."/>
            <person name="Lin X."/>
            <person name="Liu S.X."/>
            <person name="Liu Z.A."/>
            <person name="Luros J.S."/>
            <person name="Maiti R."/>
            <person name="Marziali A."/>
            <person name="Militscher J."/>
            <person name="Miranda M."/>
            <person name="Nguyen M."/>
            <person name="Nierman W.C."/>
            <person name="Osborne B.I."/>
            <person name="Pai G."/>
            <person name="Peterson J."/>
            <person name="Pham P.K."/>
            <person name="Rizzo M."/>
            <person name="Rooney T."/>
            <person name="Rowley D."/>
            <person name="Sakano H."/>
            <person name="Salzberg S.L."/>
            <person name="Schwartz J.R."/>
            <person name="Shinn P."/>
            <person name="Southwick A.M."/>
            <person name="Sun H."/>
            <person name="Tallon L.J."/>
            <person name="Tambunga G."/>
            <person name="Toriumi M.J."/>
            <person name="Town C.D."/>
            <person name="Utterback T."/>
            <person name="Van Aken S."/>
            <person name="Vaysberg M."/>
            <person name="Vysotskaia V.S."/>
            <person name="Walker M."/>
            <person name="Wu D."/>
            <person name="Yu G."/>
            <person name="Fraser C.M."/>
            <person name="Venter J.C."/>
            <person name="Davis R.W."/>
        </authorList>
    </citation>
    <scope>NUCLEOTIDE SEQUENCE [LARGE SCALE GENOMIC DNA]</scope>
    <source>
        <strain>cv. Columbia</strain>
    </source>
</reference>
<reference key="2">
    <citation type="journal article" date="2017" name="Plant J.">
        <title>Araport11: a complete reannotation of the Arabidopsis thaliana reference genome.</title>
        <authorList>
            <person name="Cheng C.Y."/>
            <person name="Krishnakumar V."/>
            <person name="Chan A.P."/>
            <person name="Thibaud-Nissen F."/>
            <person name="Schobel S."/>
            <person name="Town C.D."/>
        </authorList>
    </citation>
    <scope>GENOME REANNOTATION</scope>
    <source>
        <strain>cv. Columbia</strain>
    </source>
</reference>
<reference key="3">
    <citation type="journal article" date="2003" name="Science">
        <title>Empirical analysis of transcriptional activity in the Arabidopsis genome.</title>
        <authorList>
            <person name="Yamada K."/>
            <person name="Lim J."/>
            <person name="Dale J.M."/>
            <person name="Chen H."/>
            <person name="Shinn P."/>
            <person name="Palm C.J."/>
            <person name="Southwick A.M."/>
            <person name="Wu H.C."/>
            <person name="Kim C.J."/>
            <person name="Nguyen M."/>
            <person name="Pham P.K."/>
            <person name="Cheuk R.F."/>
            <person name="Karlin-Newmann G."/>
            <person name="Liu S.X."/>
            <person name="Lam B."/>
            <person name="Sakano H."/>
            <person name="Wu T."/>
            <person name="Yu G."/>
            <person name="Miranda M."/>
            <person name="Quach H.L."/>
            <person name="Tripp M."/>
            <person name="Chang C.H."/>
            <person name="Lee J.M."/>
            <person name="Toriumi M.J."/>
            <person name="Chan M.M."/>
            <person name="Tang C.C."/>
            <person name="Onodera C.S."/>
            <person name="Deng J.M."/>
            <person name="Akiyama K."/>
            <person name="Ansari Y."/>
            <person name="Arakawa T."/>
            <person name="Banh J."/>
            <person name="Banno F."/>
            <person name="Bowser L."/>
            <person name="Brooks S.Y."/>
            <person name="Carninci P."/>
            <person name="Chao Q."/>
            <person name="Choy N."/>
            <person name="Enju A."/>
            <person name="Goldsmith A.D."/>
            <person name="Gurjal M."/>
            <person name="Hansen N.F."/>
            <person name="Hayashizaki Y."/>
            <person name="Johnson-Hopson C."/>
            <person name="Hsuan V.W."/>
            <person name="Iida K."/>
            <person name="Karnes M."/>
            <person name="Khan S."/>
            <person name="Koesema E."/>
            <person name="Ishida J."/>
            <person name="Jiang P.X."/>
            <person name="Jones T."/>
            <person name="Kawai J."/>
            <person name="Kamiya A."/>
            <person name="Meyers C."/>
            <person name="Nakajima M."/>
            <person name="Narusaka M."/>
            <person name="Seki M."/>
            <person name="Sakurai T."/>
            <person name="Satou M."/>
            <person name="Tamse R."/>
            <person name="Vaysberg M."/>
            <person name="Wallender E.K."/>
            <person name="Wong C."/>
            <person name="Yamamura Y."/>
            <person name="Yuan S."/>
            <person name="Shinozaki K."/>
            <person name="Davis R.W."/>
            <person name="Theologis A."/>
            <person name="Ecker J.R."/>
        </authorList>
    </citation>
    <scope>NUCLEOTIDE SEQUENCE [LARGE SCALE MRNA]</scope>
    <source>
        <strain>cv. Columbia</strain>
    </source>
</reference>
<reference key="4">
    <citation type="journal article" date="2015" name="J. Biol. Chem.">
        <title>Oxidation of monolignols by members of the berberine bridge enzyme family suggests a role in plant cell wall metabolism.</title>
        <authorList>
            <person name="Daniel B."/>
            <person name="Pavkov-Keller T."/>
            <person name="Steiner B."/>
            <person name="Dordic A."/>
            <person name="Gutmann A."/>
            <person name="Nidetzky B."/>
            <person name="Sensen C.W."/>
            <person name="van der Graaff E."/>
            <person name="Wallner S."/>
            <person name="Gruber K."/>
            <person name="Macheroux P."/>
        </authorList>
    </citation>
    <scope>GENE FAMILY</scope>
    <scope>NOMENCLATURE</scope>
</reference>
<reference key="5">
    <citation type="journal article" date="2015" name="Nature">
        <title>A new cyanogenic metabolite in Arabidopsis required for inducible pathogen defence.</title>
        <authorList>
            <person name="Rajniak J."/>
            <person name="Barco B."/>
            <person name="Clay N.K."/>
            <person name="Sattely E.S."/>
        </authorList>
    </citation>
    <scope>DISRUPTION PHENOTYPE</scope>
</reference>
<dbReference type="EC" id="1.1.1.-" evidence="1"/>
<dbReference type="EC" id="1.-.-.-" evidence="9"/>
<dbReference type="EMBL" id="AC013427">
    <property type="protein sequence ID" value="AAF98575.1"/>
    <property type="molecule type" value="Genomic_DNA"/>
</dbReference>
<dbReference type="EMBL" id="CP002684">
    <property type="protein sequence ID" value="AEE30687.1"/>
    <property type="molecule type" value="Genomic_DNA"/>
</dbReference>
<dbReference type="EMBL" id="AY093233">
    <property type="protein sequence ID" value="AAM13232.1"/>
    <property type="molecule type" value="mRNA"/>
</dbReference>
<dbReference type="PIR" id="H86390">
    <property type="entry name" value="H86390"/>
</dbReference>
<dbReference type="RefSeq" id="NP_173965.1">
    <property type="nucleotide sequence ID" value="NM_102405.3"/>
</dbReference>
<dbReference type="SMR" id="Q9FZC7"/>
<dbReference type="FunCoup" id="Q9FZC7">
    <property type="interactions" value="3"/>
</dbReference>
<dbReference type="STRING" id="3702.Q9FZC7"/>
<dbReference type="GlyCosmos" id="Q9FZC7">
    <property type="glycosylation" value="6 sites, No reported glycans"/>
</dbReference>
<dbReference type="GlyGen" id="Q9FZC7">
    <property type="glycosylation" value="7 sites"/>
</dbReference>
<dbReference type="iPTMnet" id="Q9FZC7"/>
<dbReference type="PaxDb" id="3702-AT1G26410.1"/>
<dbReference type="ProteomicsDB" id="230038"/>
<dbReference type="EnsemblPlants" id="AT1G26410.1">
    <property type="protein sequence ID" value="AT1G26410.1"/>
    <property type="gene ID" value="AT1G26410"/>
</dbReference>
<dbReference type="GeneID" id="839183"/>
<dbReference type="Gramene" id="AT1G26410.1">
    <property type="protein sequence ID" value="AT1G26410.1"/>
    <property type="gene ID" value="AT1G26410"/>
</dbReference>
<dbReference type="KEGG" id="ath:AT1G26410"/>
<dbReference type="Araport" id="AT1G26410"/>
<dbReference type="TAIR" id="AT1G26410">
    <property type="gene designation" value="ATBBE6"/>
</dbReference>
<dbReference type="eggNOG" id="ENOG502QVGN">
    <property type="taxonomic scope" value="Eukaryota"/>
</dbReference>
<dbReference type="HOGENOM" id="CLU_018354_6_0_1"/>
<dbReference type="InParanoid" id="Q9FZC7"/>
<dbReference type="OMA" id="MWFDANA"/>
<dbReference type="PhylomeDB" id="Q9FZC7"/>
<dbReference type="BioCyc" id="ARA:AT1G26410-MONOMER"/>
<dbReference type="PRO" id="PR:Q9FZC7"/>
<dbReference type="Proteomes" id="UP000006548">
    <property type="component" value="Chromosome 1"/>
</dbReference>
<dbReference type="ExpressionAtlas" id="Q9FZC7">
    <property type="expression patterns" value="baseline and differential"/>
</dbReference>
<dbReference type="GO" id="GO:0005576">
    <property type="term" value="C:extracellular region"/>
    <property type="evidence" value="ECO:0007669"/>
    <property type="project" value="UniProtKB-KW"/>
</dbReference>
<dbReference type="GO" id="GO:0009505">
    <property type="term" value="C:plant-type cell wall"/>
    <property type="evidence" value="ECO:0000250"/>
    <property type="project" value="UniProtKB"/>
</dbReference>
<dbReference type="GO" id="GO:0071949">
    <property type="term" value="F:FAD binding"/>
    <property type="evidence" value="ECO:0007669"/>
    <property type="project" value="InterPro"/>
</dbReference>
<dbReference type="GO" id="GO:0016491">
    <property type="term" value="F:oxidoreductase activity"/>
    <property type="evidence" value="ECO:0007669"/>
    <property type="project" value="UniProtKB-KW"/>
</dbReference>
<dbReference type="GO" id="GO:0071456">
    <property type="term" value="P:cellular response to hypoxia"/>
    <property type="evidence" value="ECO:0000270"/>
    <property type="project" value="TAIR"/>
</dbReference>
<dbReference type="FunFam" id="3.30.43.10:FF:000004">
    <property type="entry name" value="Berberine bridge enzyme-like 15"/>
    <property type="match status" value="1"/>
</dbReference>
<dbReference type="Gene3D" id="3.30.465.10">
    <property type="match status" value="1"/>
</dbReference>
<dbReference type="Gene3D" id="3.40.462.20">
    <property type="match status" value="1"/>
</dbReference>
<dbReference type="Gene3D" id="3.30.43.10">
    <property type="entry name" value="Uridine Diphospho-n-acetylenolpyruvylglucosamine Reductase, domain 2"/>
    <property type="match status" value="1"/>
</dbReference>
<dbReference type="InterPro" id="IPR012951">
    <property type="entry name" value="BBE"/>
</dbReference>
<dbReference type="InterPro" id="IPR016166">
    <property type="entry name" value="FAD-bd_PCMH"/>
</dbReference>
<dbReference type="InterPro" id="IPR036318">
    <property type="entry name" value="FAD-bd_PCMH-like_sf"/>
</dbReference>
<dbReference type="InterPro" id="IPR016167">
    <property type="entry name" value="FAD-bd_PCMH_sub1"/>
</dbReference>
<dbReference type="InterPro" id="IPR016169">
    <property type="entry name" value="FAD-bd_PCMH_sub2"/>
</dbReference>
<dbReference type="InterPro" id="IPR006094">
    <property type="entry name" value="Oxid_FAD_bind_N"/>
</dbReference>
<dbReference type="PANTHER" id="PTHR32448">
    <property type="entry name" value="OS08G0158400 PROTEIN"/>
    <property type="match status" value="1"/>
</dbReference>
<dbReference type="Pfam" id="PF08031">
    <property type="entry name" value="BBE"/>
    <property type="match status" value="1"/>
</dbReference>
<dbReference type="Pfam" id="PF01565">
    <property type="entry name" value="FAD_binding_4"/>
    <property type="match status" value="1"/>
</dbReference>
<dbReference type="SUPFAM" id="SSF56176">
    <property type="entry name" value="FAD-binding/transporter-associated domain-like"/>
    <property type="match status" value="1"/>
</dbReference>
<dbReference type="PROSITE" id="PS51387">
    <property type="entry name" value="FAD_PCMH"/>
    <property type="match status" value="1"/>
</dbReference>
<proteinExistence type="evidence at transcript level"/>
<sequence>MKEAFVFLLCLTNKFPKKFNSCSKKKETLYVLGLVLLVSFIEAPVTKPNFGKFIECLRDRTTPENPITDVISIADNSTTFLSSYVSYTKNKRFSSPNFKKLLAIIAAKHVSHVQATVVCAKSNGIQLRIRSGGHDNEGFSYMSSVPFVILDMHNLRSIDVNLSRKNAWVQAGATLGELYVKINEASQTLAFPAGVCPTVGAGGHISGGGFGNLMRKFGITVDHVIDAQIIDVNGKLLNRAAMGEDLFWAIRGGGSSFGVILSWKINLVEVPKILTVFKVNKTLEQGGTDILYKWQLVANKLPDSLFITAWPRTVNGPKPGERTVAVVFYAQFLGPTDKLMEIMDQSFPELGLGREDCHEMSWLNTTLFWANYPAGTPKSILLDRPPTNSVSFKSKSDFVKKPIPKKGLEKLWKTMFKFNSSVSLQFNPYGGVMDRIPATATAFPHRKGNLFKVQYSTMWFDANATESSLAMMNELFEVAEPYVSSNPREAFFNFRDIDIGSNPSGETNVDEAKIYGSKYFLGNLKRLMDVKAKYDPDNFFKNEQSIPPVRVK</sequence>
<gene>
    <name evidence="8" type="primary">FOX4</name>
    <name evidence="10" type="ordered locus">At1g26410</name>
    <name evidence="11" type="ORF">T1K7.21</name>
</gene>
<evidence type="ECO:0000250" key="1">
    <source>
        <dbReference type="UniProtKB" id="O64743"/>
    </source>
</evidence>
<evidence type="ECO:0000250" key="2">
    <source>
        <dbReference type="UniProtKB" id="P30986"/>
    </source>
</evidence>
<evidence type="ECO:0000255" key="3"/>
<evidence type="ECO:0000255" key="4">
    <source>
        <dbReference type="PROSITE-ProRule" id="PRU00498"/>
    </source>
</evidence>
<evidence type="ECO:0000255" key="5">
    <source>
        <dbReference type="PROSITE-ProRule" id="PRU00718"/>
    </source>
</evidence>
<evidence type="ECO:0000269" key="6">
    <source>
    </source>
</evidence>
<evidence type="ECO:0000303" key="7">
    <source>
    </source>
</evidence>
<evidence type="ECO:0000303" key="8">
    <source>
    </source>
</evidence>
<evidence type="ECO:0000305" key="9"/>
<evidence type="ECO:0000312" key="10">
    <source>
        <dbReference type="Araport" id="AT1G26410"/>
    </source>
</evidence>
<evidence type="ECO:0000312" key="11">
    <source>
        <dbReference type="EMBL" id="AAF98575.1"/>
    </source>
</evidence>
<name>FOX4_ARATH</name>
<keyword id="KW-0134">Cell wall</keyword>
<keyword id="KW-1015">Disulfide bond</keyword>
<keyword id="KW-0274">FAD</keyword>
<keyword id="KW-0285">Flavoprotein</keyword>
<keyword id="KW-0325">Glycoprotein</keyword>
<keyword id="KW-0547">Nucleotide-binding</keyword>
<keyword id="KW-0560">Oxidoreductase</keyword>
<keyword id="KW-1185">Reference proteome</keyword>
<keyword id="KW-0964">Secreted</keyword>
<keyword id="KW-0732">Signal</keyword>
<feature type="signal peptide" evidence="3">
    <location>
        <begin position="1"/>
        <end position="16"/>
    </location>
</feature>
<feature type="chain" id="PRO_0000434891" description="Berberine bridge enzyme-like 6" evidence="3">
    <location>
        <begin position="17"/>
        <end position="552"/>
    </location>
</feature>
<feature type="domain" description="FAD-binding PCMH-type" evidence="5">
    <location>
        <begin position="93"/>
        <end position="270"/>
    </location>
</feature>
<feature type="glycosylation site" description="N-linked (GlcNAc...) asparagine" evidence="4">
    <location>
        <position position="76"/>
    </location>
</feature>
<feature type="glycosylation site" description="N-linked (GlcNAc...) asparagine" evidence="4">
    <location>
        <position position="161"/>
    </location>
</feature>
<feature type="glycosylation site" description="N-linked (GlcNAc...) asparagine" evidence="4">
    <location>
        <position position="280"/>
    </location>
</feature>
<feature type="glycosylation site" description="N-linked (GlcNAc...) asparagine" evidence="4">
    <location>
        <position position="364"/>
    </location>
</feature>
<feature type="glycosylation site" description="N-linked (GlcNAc...) asparagine" evidence="4">
    <location>
        <position position="419"/>
    </location>
</feature>
<feature type="glycosylation site" description="N-linked (GlcNAc...) asparagine" evidence="4">
    <location>
        <position position="463"/>
    </location>
</feature>
<feature type="disulfide bond" evidence="2">
    <location>
        <begin position="56"/>
        <end position="119"/>
    </location>
</feature>
<feature type="cross-link" description="6-(S-cysteinyl)-8alpha-(pros-histidyl)-FAD (His-Cys)" evidence="1">
    <location>
        <begin position="134"/>
        <end position="196"/>
    </location>
</feature>
<feature type="sequence conflict" description="In Ref. 3; AAM13232." evidence="9" ref="3">
    <original>L</original>
    <variation>F</variation>
    <location>
        <position position="381"/>
    </location>
</feature>
<protein>
    <recommendedName>
        <fullName evidence="7">Berberine bridge enzyme-like 6</fullName>
        <shortName evidence="7">AtBBE-like 6</shortName>
        <ecNumber evidence="1">1.1.1.-</ecNumber>
    </recommendedName>
    <alternativeName>
        <fullName evidence="8">Flavin-dependent oxidoreductase FOX4</fullName>
        <ecNumber evidence="9">1.-.-.-</ecNumber>
    </alternativeName>
</protein>
<comment type="function">
    <text evidence="9">Probable flavin-dependent oxidoreductase.</text>
</comment>
<comment type="cofactor">
    <cofactor evidence="1">
        <name>FAD</name>
        <dbReference type="ChEBI" id="CHEBI:57692"/>
    </cofactor>
    <text evidence="1">Binds 1 FAD per subunit in a bicovalent manner.</text>
</comment>
<comment type="subcellular location">
    <subcellularLocation>
        <location evidence="1">Secreted</location>
        <location evidence="1">Cell wall</location>
    </subcellularLocation>
</comment>
<comment type="PTM">
    <text evidence="1">The FAD cofactor is bound via a bicovalent 6-S-cysteinyl, 8alpha-N1-histidyl FAD linkage.</text>
</comment>
<comment type="disruption phenotype">
    <text evidence="6">No effect on the levels of ICN metabolites.</text>
</comment>
<comment type="similarity">
    <text evidence="9">Belongs to the oxygen-dependent FAD-linked oxidoreductase family.</text>
</comment>